<name>ILVC_LEUMC</name>
<proteinExistence type="inferred from homology"/>
<protein>
    <recommendedName>
        <fullName evidence="1">Ketol-acid reductoisomerase (NADP(+))</fullName>
        <shortName evidence="1">KARI</shortName>
        <ecNumber evidence="1">1.1.1.86</ecNumber>
    </recommendedName>
    <alternativeName>
        <fullName evidence="1">Acetohydroxy-acid isomeroreductase</fullName>
        <shortName evidence="1">AHIR</shortName>
    </alternativeName>
    <alternativeName>
        <fullName evidence="1">Alpha-keto-beta-hydroxylacyl reductoisomerase</fullName>
    </alternativeName>
    <alternativeName>
        <fullName evidence="1">Ketol-acid reductoisomerase type 1</fullName>
    </alternativeName>
    <alternativeName>
        <fullName evidence="1">Ketol-acid reductoisomerase type I</fullName>
    </alternativeName>
</protein>
<organism>
    <name type="scientific">Leuconostoc mesenteroides subsp. cremoris</name>
    <dbReference type="NCBI Taxonomy" id="33965"/>
    <lineage>
        <taxon>Bacteria</taxon>
        <taxon>Bacillati</taxon>
        <taxon>Bacillota</taxon>
        <taxon>Bacilli</taxon>
        <taxon>Lactobacillales</taxon>
        <taxon>Lactobacillaceae</taxon>
        <taxon>Leuconostoc</taxon>
    </lineage>
</organism>
<accession>P97115</accession>
<evidence type="ECO:0000255" key="1">
    <source>
        <dbReference type="HAMAP-Rule" id="MF_00435"/>
    </source>
</evidence>
<evidence type="ECO:0000255" key="2">
    <source>
        <dbReference type="PROSITE-ProRule" id="PRU01197"/>
    </source>
</evidence>
<evidence type="ECO:0000255" key="3">
    <source>
        <dbReference type="PROSITE-ProRule" id="PRU01198"/>
    </source>
</evidence>
<reference key="1">
    <citation type="submission" date="1996-03" db="EMBL/GenBank/DDBJ databases">
        <authorList>
            <person name="Cavin J.-F."/>
            <person name="Dartois V.A."/>
            <person name="Divies C."/>
        </authorList>
    </citation>
    <scope>NUCLEOTIDE SEQUENCE [GENOMIC DNA]</scope>
</reference>
<comment type="function">
    <text evidence="1">Involved in the biosynthesis of branched-chain amino acids (BCAA). Catalyzes an alkyl-migration followed by a ketol-acid reduction of (S)-2-acetolactate (S2AL) to yield (R)-2,3-dihydroxy-isovalerate. In the isomerase reaction, S2AL is rearranged via a Mg-dependent methyl migration to produce 3-hydroxy-3-methyl-2-ketobutyrate (HMKB). In the reductase reaction, this 2-ketoacid undergoes a metal-dependent reduction by NADPH to yield (R)-2,3-dihydroxy-isovalerate.</text>
</comment>
<comment type="catalytic activity">
    <reaction evidence="1">
        <text>(2R)-2,3-dihydroxy-3-methylbutanoate + NADP(+) = (2S)-2-acetolactate + NADPH + H(+)</text>
        <dbReference type="Rhea" id="RHEA:22068"/>
        <dbReference type="ChEBI" id="CHEBI:15378"/>
        <dbReference type="ChEBI" id="CHEBI:49072"/>
        <dbReference type="ChEBI" id="CHEBI:57783"/>
        <dbReference type="ChEBI" id="CHEBI:58349"/>
        <dbReference type="ChEBI" id="CHEBI:58476"/>
        <dbReference type="EC" id="1.1.1.86"/>
    </reaction>
</comment>
<comment type="catalytic activity">
    <reaction evidence="1">
        <text>(2R,3R)-2,3-dihydroxy-3-methylpentanoate + NADP(+) = (S)-2-ethyl-2-hydroxy-3-oxobutanoate + NADPH + H(+)</text>
        <dbReference type="Rhea" id="RHEA:13493"/>
        <dbReference type="ChEBI" id="CHEBI:15378"/>
        <dbReference type="ChEBI" id="CHEBI:49256"/>
        <dbReference type="ChEBI" id="CHEBI:49258"/>
        <dbReference type="ChEBI" id="CHEBI:57783"/>
        <dbReference type="ChEBI" id="CHEBI:58349"/>
        <dbReference type="EC" id="1.1.1.86"/>
    </reaction>
</comment>
<comment type="cofactor">
    <cofactor evidence="1">
        <name>Mg(2+)</name>
        <dbReference type="ChEBI" id="CHEBI:18420"/>
    </cofactor>
    <text evidence="1">Binds 2 magnesium ions per subunit.</text>
</comment>
<comment type="pathway">
    <text evidence="1">Amino-acid biosynthesis; L-isoleucine biosynthesis; L-isoleucine from 2-oxobutanoate: step 2/4.</text>
</comment>
<comment type="pathway">
    <text evidence="1">Amino-acid biosynthesis; L-valine biosynthesis; L-valine from pyruvate: step 2/4.</text>
</comment>
<comment type="similarity">
    <text evidence="1">Belongs to the ketol-acid reductoisomerase family.</text>
</comment>
<feature type="chain" id="PRO_0000151322" description="Ketol-acid reductoisomerase (NADP(+))">
    <location>
        <begin position="1"/>
        <end position="347"/>
    </location>
</feature>
<feature type="domain" description="KARI N-terminal Rossmann" evidence="2">
    <location>
        <begin position="3"/>
        <end position="182"/>
    </location>
</feature>
<feature type="domain" description="KARI C-terminal knotted" evidence="3">
    <location>
        <begin position="183"/>
        <end position="328"/>
    </location>
</feature>
<feature type="active site" evidence="1">
    <location>
        <position position="108"/>
    </location>
</feature>
<feature type="binding site" evidence="1">
    <location>
        <begin position="26"/>
        <end position="29"/>
    </location>
    <ligand>
        <name>NADP(+)</name>
        <dbReference type="ChEBI" id="CHEBI:58349"/>
    </ligand>
</feature>
<feature type="binding site" evidence="1">
    <location>
        <position position="49"/>
    </location>
    <ligand>
        <name>NADP(+)</name>
        <dbReference type="ChEBI" id="CHEBI:58349"/>
    </ligand>
</feature>
<feature type="binding site" evidence="1">
    <location>
        <position position="53"/>
    </location>
    <ligand>
        <name>NADP(+)</name>
        <dbReference type="ChEBI" id="CHEBI:58349"/>
    </ligand>
</feature>
<feature type="binding site" evidence="1">
    <location>
        <begin position="83"/>
        <end position="86"/>
    </location>
    <ligand>
        <name>NADP(+)</name>
        <dbReference type="ChEBI" id="CHEBI:58349"/>
    </ligand>
</feature>
<feature type="binding site" evidence="1">
    <location>
        <position position="134"/>
    </location>
    <ligand>
        <name>NADP(+)</name>
        <dbReference type="ChEBI" id="CHEBI:58349"/>
    </ligand>
</feature>
<feature type="binding site" evidence="1">
    <location>
        <position position="191"/>
    </location>
    <ligand>
        <name>Mg(2+)</name>
        <dbReference type="ChEBI" id="CHEBI:18420"/>
        <label>1</label>
    </ligand>
</feature>
<feature type="binding site" evidence="1">
    <location>
        <position position="191"/>
    </location>
    <ligand>
        <name>Mg(2+)</name>
        <dbReference type="ChEBI" id="CHEBI:18420"/>
        <label>2</label>
    </ligand>
</feature>
<feature type="binding site" evidence="1">
    <location>
        <position position="195"/>
    </location>
    <ligand>
        <name>Mg(2+)</name>
        <dbReference type="ChEBI" id="CHEBI:18420"/>
        <label>1</label>
    </ligand>
</feature>
<feature type="binding site" evidence="1">
    <location>
        <position position="227"/>
    </location>
    <ligand>
        <name>Mg(2+)</name>
        <dbReference type="ChEBI" id="CHEBI:18420"/>
        <label>2</label>
    </ligand>
</feature>
<feature type="binding site" evidence="1">
    <location>
        <position position="231"/>
    </location>
    <ligand>
        <name>Mg(2+)</name>
        <dbReference type="ChEBI" id="CHEBI:18420"/>
        <label>2</label>
    </ligand>
</feature>
<feature type="binding site" evidence="1">
    <location>
        <position position="252"/>
    </location>
    <ligand>
        <name>substrate</name>
    </ligand>
</feature>
<dbReference type="EC" id="1.1.1.86" evidence="1"/>
<dbReference type="EMBL" id="U50749">
    <property type="protein sequence ID" value="AAB48550.1"/>
    <property type="molecule type" value="Genomic_DNA"/>
</dbReference>
<dbReference type="SMR" id="P97115"/>
<dbReference type="UniPathway" id="UPA00047">
    <property type="reaction ID" value="UER00056"/>
</dbReference>
<dbReference type="UniPathway" id="UPA00049">
    <property type="reaction ID" value="UER00060"/>
</dbReference>
<dbReference type="GO" id="GO:0005829">
    <property type="term" value="C:cytosol"/>
    <property type="evidence" value="ECO:0007669"/>
    <property type="project" value="TreeGrafter"/>
</dbReference>
<dbReference type="GO" id="GO:0004455">
    <property type="term" value="F:ketol-acid reductoisomerase activity"/>
    <property type="evidence" value="ECO:0007669"/>
    <property type="project" value="UniProtKB-UniRule"/>
</dbReference>
<dbReference type="GO" id="GO:0000287">
    <property type="term" value="F:magnesium ion binding"/>
    <property type="evidence" value="ECO:0007669"/>
    <property type="project" value="UniProtKB-UniRule"/>
</dbReference>
<dbReference type="GO" id="GO:0050661">
    <property type="term" value="F:NADP binding"/>
    <property type="evidence" value="ECO:0007669"/>
    <property type="project" value="InterPro"/>
</dbReference>
<dbReference type="GO" id="GO:0009097">
    <property type="term" value="P:isoleucine biosynthetic process"/>
    <property type="evidence" value="ECO:0007669"/>
    <property type="project" value="UniProtKB-UniRule"/>
</dbReference>
<dbReference type="GO" id="GO:0009099">
    <property type="term" value="P:L-valine biosynthetic process"/>
    <property type="evidence" value="ECO:0007669"/>
    <property type="project" value="UniProtKB-UniRule"/>
</dbReference>
<dbReference type="FunFam" id="3.40.50.720:FF:000023">
    <property type="entry name" value="Ketol-acid reductoisomerase (NADP(+))"/>
    <property type="match status" value="1"/>
</dbReference>
<dbReference type="Gene3D" id="6.10.240.10">
    <property type="match status" value="1"/>
</dbReference>
<dbReference type="Gene3D" id="3.40.50.720">
    <property type="entry name" value="NAD(P)-binding Rossmann-like Domain"/>
    <property type="match status" value="1"/>
</dbReference>
<dbReference type="HAMAP" id="MF_00435">
    <property type="entry name" value="IlvC"/>
    <property type="match status" value="1"/>
</dbReference>
<dbReference type="InterPro" id="IPR008927">
    <property type="entry name" value="6-PGluconate_DH-like_C_sf"/>
</dbReference>
<dbReference type="InterPro" id="IPR013023">
    <property type="entry name" value="KARI"/>
</dbReference>
<dbReference type="InterPro" id="IPR000506">
    <property type="entry name" value="KARI_C"/>
</dbReference>
<dbReference type="InterPro" id="IPR013116">
    <property type="entry name" value="KARI_N"/>
</dbReference>
<dbReference type="InterPro" id="IPR014359">
    <property type="entry name" value="KARI_prok"/>
</dbReference>
<dbReference type="InterPro" id="IPR036291">
    <property type="entry name" value="NAD(P)-bd_dom_sf"/>
</dbReference>
<dbReference type="NCBIfam" id="TIGR00465">
    <property type="entry name" value="ilvC"/>
    <property type="match status" value="1"/>
</dbReference>
<dbReference type="NCBIfam" id="NF004017">
    <property type="entry name" value="PRK05479.1"/>
    <property type="match status" value="1"/>
</dbReference>
<dbReference type="PANTHER" id="PTHR21371">
    <property type="entry name" value="KETOL-ACID REDUCTOISOMERASE, MITOCHONDRIAL"/>
    <property type="match status" value="1"/>
</dbReference>
<dbReference type="PANTHER" id="PTHR21371:SF1">
    <property type="entry name" value="KETOL-ACID REDUCTOISOMERASE, MITOCHONDRIAL"/>
    <property type="match status" value="1"/>
</dbReference>
<dbReference type="Pfam" id="PF01450">
    <property type="entry name" value="KARI_C"/>
    <property type="match status" value="1"/>
</dbReference>
<dbReference type="Pfam" id="PF07991">
    <property type="entry name" value="KARI_N"/>
    <property type="match status" value="1"/>
</dbReference>
<dbReference type="PIRSF" id="PIRSF000116">
    <property type="entry name" value="IlvC_gammaproteo"/>
    <property type="match status" value="1"/>
</dbReference>
<dbReference type="SUPFAM" id="SSF48179">
    <property type="entry name" value="6-phosphogluconate dehydrogenase C-terminal domain-like"/>
    <property type="match status" value="1"/>
</dbReference>
<dbReference type="SUPFAM" id="SSF51735">
    <property type="entry name" value="NAD(P)-binding Rossmann-fold domains"/>
    <property type="match status" value="1"/>
</dbReference>
<dbReference type="PROSITE" id="PS51851">
    <property type="entry name" value="KARI_C"/>
    <property type="match status" value="1"/>
</dbReference>
<dbReference type="PROSITE" id="PS51850">
    <property type="entry name" value="KARI_N"/>
    <property type="match status" value="1"/>
</dbReference>
<keyword id="KW-0028">Amino-acid biosynthesis</keyword>
<keyword id="KW-0100">Branched-chain amino acid biosynthesis</keyword>
<keyword id="KW-0460">Magnesium</keyword>
<keyword id="KW-0479">Metal-binding</keyword>
<keyword id="KW-0521">NADP</keyword>
<keyword id="KW-0560">Oxidoreductase</keyword>
<sequence length="347" mass="38085">MTTKMFYDKDIDTKPLENKKIAVIGYGAQGHAQANNLRVSGFDVIMGLRPGKSFDSVKKDGFEVYSAAEATAQADVVMMETPDELQAAVWEKEVEPNLKAGSDLGFSHGFNIVYGLIKPNADINVMIIAPKGPGNIERRQFVEGGGIPSLYGVHQDPTGDTAEVAKAYAKGIGSGCAGILETTFEEETTEDLFGEQAVLCGGLTQLIEAGFNTLVEAGYSPELAYFETSHEMKMIVDLIFEGGFEKMRHDCSNTCEYGEMLNGPRIITEESKQGMRDVLKDIQDGTYAKKWLAEYNSGLKDLEKMRTEYKSGLYEQTGKKVRAMMPWISDADKYSTAADTEQFSAAK</sequence>
<gene>
    <name evidence="1" type="primary">ilvC</name>
</gene>